<proteinExistence type="inferred from homology"/>
<evidence type="ECO:0000255" key="1">
    <source>
        <dbReference type="HAMAP-Rule" id="MF_00712"/>
    </source>
</evidence>
<reference key="1">
    <citation type="submission" date="2008-06" db="EMBL/GenBank/DDBJ databases">
        <title>Complete sequence of Chlorobaculum parvum NCIB 8327.</title>
        <authorList>
            <consortium name="US DOE Joint Genome Institute"/>
            <person name="Lucas S."/>
            <person name="Copeland A."/>
            <person name="Lapidus A."/>
            <person name="Glavina del Rio T."/>
            <person name="Dalin E."/>
            <person name="Tice H."/>
            <person name="Bruce D."/>
            <person name="Goodwin L."/>
            <person name="Pitluck S."/>
            <person name="Schmutz J."/>
            <person name="Larimer F."/>
            <person name="Land M."/>
            <person name="Hauser L."/>
            <person name="Kyrpides N."/>
            <person name="Mikhailova N."/>
            <person name="Zhao F."/>
            <person name="Li T."/>
            <person name="Liu Z."/>
            <person name="Overmann J."/>
            <person name="Bryant D.A."/>
            <person name="Richardson P."/>
        </authorList>
    </citation>
    <scope>NUCLEOTIDE SEQUENCE [LARGE SCALE GENOMIC DNA]</scope>
    <source>
        <strain>DSM 263 / NCIMB 8327</strain>
    </source>
</reference>
<organism>
    <name type="scientific">Chlorobaculum parvum (strain DSM 263 / NCIMB 8327)</name>
    <name type="common">Chlorobium vibrioforme subsp. thiosulfatophilum</name>
    <dbReference type="NCBI Taxonomy" id="517417"/>
    <lineage>
        <taxon>Bacteria</taxon>
        <taxon>Pseudomonadati</taxon>
        <taxon>Chlorobiota</taxon>
        <taxon>Chlorobiia</taxon>
        <taxon>Chlorobiales</taxon>
        <taxon>Chlorobiaceae</taxon>
        <taxon>Chlorobaculum</taxon>
    </lineage>
</organism>
<dbReference type="EC" id="1.4.4.2" evidence="1"/>
<dbReference type="EMBL" id="CP001099">
    <property type="protein sequence ID" value="ACF10985.1"/>
    <property type="molecule type" value="Genomic_DNA"/>
</dbReference>
<dbReference type="RefSeq" id="WP_012501818.1">
    <property type="nucleotide sequence ID" value="NC_011027.1"/>
</dbReference>
<dbReference type="SMR" id="B3QM32"/>
<dbReference type="STRING" id="517417.Cpar_0563"/>
<dbReference type="KEGG" id="cpc:Cpar_0563"/>
<dbReference type="eggNOG" id="COG0403">
    <property type="taxonomic scope" value="Bacteria"/>
</dbReference>
<dbReference type="HOGENOM" id="CLU_004620_0_2_10"/>
<dbReference type="OrthoDB" id="9801272at2"/>
<dbReference type="Proteomes" id="UP000008811">
    <property type="component" value="Chromosome"/>
</dbReference>
<dbReference type="GO" id="GO:0004375">
    <property type="term" value="F:glycine dehydrogenase (decarboxylating) activity"/>
    <property type="evidence" value="ECO:0007669"/>
    <property type="project" value="UniProtKB-EC"/>
</dbReference>
<dbReference type="GO" id="GO:0019464">
    <property type="term" value="P:glycine decarboxylation via glycine cleavage system"/>
    <property type="evidence" value="ECO:0007669"/>
    <property type="project" value="UniProtKB-UniRule"/>
</dbReference>
<dbReference type="GO" id="GO:0009116">
    <property type="term" value="P:nucleoside metabolic process"/>
    <property type="evidence" value="ECO:0007669"/>
    <property type="project" value="InterPro"/>
</dbReference>
<dbReference type="CDD" id="cd00613">
    <property type="entry name" value="GDC-P"/>
    <property type="match status" value="1"/>
</dbReference>
<dbReference type="Gene3D" id="3.90.1150.10">
    <property type="entry name" value="Aspartate Aminotransferase, domain 1"/>
    <property type="match status" value="1"/>
</dbReference>
<dbReference type="Gene3D" id="3.40.640.10">
    <property type="entry name" value="Type I PLP-dependent aspartate aminotransferase-like (Major domain)"/>
    <property type="match status" value="1"/>
</dbReference>
<dbReference type="HAMAP" id="MF_00712">
    <property type="entry name" value="GcvPA"/>
    <property type="match status" value="1"/>
</dbReference>
<dbReference type="InterPro" id="IPR023010">
    <property type="entry name" value="GcvPA"/>
</dbReference>
<dbReference type="InterPro" id="IPR049315">
    <property type="entry name" value="GDC-P_N"/>
</dbReference>
<dbReference type="InterPro" id="IPR020581">
    <property type="entry name" value="GDC_P"/>
</dbReference>
<dbReference type="InterPro" id="IPR015424">
    <property type="entry name" value="PyrdxlP-dep_Trfase"/>
</dbReference>
<dbReference type="InterPro" id="IPR015421">
    <property type="entry name" value="PyrdxlP-dep_Trfase_major"/>
</dbReference>
<dbReference type="InterPro" id="IPR015422">
    <property type="entry name" value="PyrdxlP-dep_Trfase_small"/>
</dbReference>
<dbReference type="NCBIfam" id="NF001696">
    <property type="entry name" value="PRK00451.1"/>
    <property type="match status" value="1"/>
</dbReference>
<dbReference type="PANTHER" id="PTHR42806">
    <property type="entry name" value="GLYCINE CLEAVAGE SYSTEM P-PROTEIN"/>
    <property type="match status" value="1"/>
</dbReference>
<dbReference type="PANTHER" id="PTHR42806:SF1">
    <property type="entry name" value="GLYCINE DEHYDROGENASE (DECARBOXYLATING)"/>
    <property type="match status" value="1"/>
</dbReference>
<dbReference type="Pfam" id="PF02347">
    <property type="entry name" value="GDC-P"/>
    <property type="match status" value="1"/>
</dbReference>
<dbReference type="PIRSF" id="PIRSF006815">
    <property type="entry name" value="GcvPA"/>
    <property type="match status" value="1"/>
</dbReference>
<dbReference type="SUPFAM" id="SSF53383">
    <property type="entry name" value="PLP-dependent transferases"/>
    <property type="match status" value="1"/>
</dbReference>
<protein>
    <recommendedName>
        <fullName evidence="1">Probable glycine dehydrogenase (decarboxylating) subunit 1</fullName>
        <ecNumber evidence="1">1.4.4.2</ecNumber>
    </recommendedName>
    <alternativeName>
        <fullName evidence="1">Glycine cleavage system P-protein subunit 1</fullName>
    </alternativeName>
    <alternativeName>
        <fullName evidence="1">Glycine decarboxylase subunit 1</fullName>
    </alternativeName>
    <alternativeName>
        <fullName evidence="1">Glycine dehydrogenase (aminomethyl-transferring) subunit 1</fullName>
    </alternativeName>
</protein>
<accession>B3QM32</accession>
<feature type="chain" id="PRO_1000132474" description="Probable glycine dehydrogenase (decarboxylating) subunit 1">
    <location>
        <begin position="1"/>
        <end position="444"/>
    </location>
</feature>
<keyword id="KW-0560">Oxidoreductase</keyword>
<gene>
    <name evidence="1" type="primary">gcvPA</name>
    <name type="ordered locus">Cpar_0563</name>
</gene>
<comment type="function">
    <text evidence="1">The glycine cleavage system catalyzes the degradation of glycine. The P protein binds the alpha-amino group of glycine through its pyridoxal phosphate cofactor; CO(2) is released and the remaining methylamine moiety is then transferred to the lipoamide cofactor of the H protein.</text>
</comment>
<comment type="catalytic activity">
    <reaction evidence="1">
        <text>N(6)-[(R)-lipoyl]-L-lysyl-[glycine-cleavage complex H protein] + glycine + H(+) = N(6)-[(R)-S(8)-aminomethyldihydrolipoyl]-L-lysyl-[glycine-cleavage complex H protein] + CO2</text>
        <dbReference type="Rhea" id="RHEA:24304"/>
        <dbReference type="Rhea" id="RHEA-COMP:10494"/>
        <dbReference type="Rhea" id="RHEA-COMP:10495"/>
        <dbReference type="ChEBI" id="CHEBI:15378"/>
        <dbReference type="ChEBI" id="CHEBI:16526"/>
        <dbReference type="ChEBI" id="CHEBI:57305"/>
        <dbReference type="ChEBI" id="CHEBI:83099"/>
        <dbReference type="ChEBI" id="CHEBI:83143"/>
        <dbReference type="EC" id="1.4.4.2"/>
    </reaction>
</comment>
<comment type="subunit">
    <text evidence="1">The glycine cleavage system is composed of four proteins: P, T, L and H. In this organism, the P 'protein' is a heterodimer of two subunits.</text>
</comment>
<comment type="similarity">
    <text evidence="1">Belongs to the GcvP family. N-terminal subunit subfamily.</text>
</comment>
<name>GCSPA_CHLP8</name>
<sequence length="444" mass="47665">MPFIVNTDAERAEMLREIGVENFEALIADIPEEVRLKKALDLLPAMGEPEVKSLLEKMASSNAATCDHVSFLGAGAYDHFIPAAVKTIASRSEFYTAYTPYQAEVSQGTLQAIYEYQSVMCRLYGMDVANASMYDGASALAEAALIALNVTGRNGIVVAGKLHPYTSQVLETYLEAAGDRPIVQNSIEDGIGSVAALETLVSSETAAVIVQQPNFYGCLEEVEAIGEIAKKHGALFIVSADPVSLGVLEAPGNYGADIAVGEGQSVGNAQSFGGPYLGILTVKQAHVRKIPGRLVGMTKDKDGNDGFILTLQTREQHIRREKATSNICSNQALCALQAVVHLSLLGKEGIQDVANRSMQKAHYLADRITELPGFSLKFSAPFFREFVVETPVPAATIIEKMLDKKVFAGVDLSAWGEDGLLIAVTEKRTKEELDSFVSELASLG</sequence>